<organism>
    <name type="scientific">Charina bottae</name>
    <name type="common">Northern rubber boa</name>
    <dbReference type="NCBI Taxonomy" id="51858"/>
    <lineage>
        <taxon>Eukaryota</taxon>
        <taxon>Metazoa</taxon>
        <taxon>Chordata</taxon>
        <taxon>Craniata</taxon>
        <taxon>Vertebrata</taxon>
        <taxon>Euteleostomi</taxon>
        <taxon>Lepidosauria</taxon>
        <taxon>Squamata</taxon>
        <taxon>Bifurcata</taxon>
        <taxon>Unidentata</taxon>
        <taxon>Episquamata</taxon>
        <taxon>Toxicofera</taxon>
        <taxon>Serpentes</taxon>
        <taxon>Henophidia</taxon>
        <taxon>Boidae</taxon>
        <taxon>Erycinae</taxon>
        <taxon>Charina</taxon>
    </lineage>
</organism>
<dbReference type="EMBL" id="AY988059">
    <property type="protein sequence ID" value="AAY44266.1"/>
    <property type="molecule type" value="Genomic_DNA"/>
</dbReference>
<dbReference type="SMR" id="Q1X6X9"/>
<dbReference type="GlyCosmos" id="Q1X6X9">
    <property type="glycosylation" value="1 site, No reported glycans"/>
</dbReference>
<dbReference type="GO" id="GO:0030424">
    <property type="term" value="C:axon"/>
    <property type="evidence" value="ECO:0007669"/>
    <property type="project" value="TreeGrafter"/>
</dbReference>
<dbReference type="GO" id="GO:0030425">
    <property type="term" value="C:dendrite"/>
    <property type="evidence" value="ECO:0007669"/>
    <property type="project" value="TreeGrafter"/>
</dbReference>
<dbReference type="GO" id="GO:0005615">
    <property type="term" value="C:extracellular space"/>
    <property type="evidence" value="ECO:0007669"/>
    <property type="project" value="TreeGrafter"/>
</dbReference>
<dbReference type="GO" id="GO:0008021">
    <property type="term" value="C:synaptic vesicle"/>
    <property type="evidence" value="ECO:0007669"/>
    <property type="project" value="TreeGrafter"/>
</dbReference>
<dbReference type="GO" id="GO:0008083">
    <property type="term" value="F:growth factor activity"/>
    <property type="evidence" value="ECO:0007669"/>
    <property type="project" value="UniProtKB-KW"/>
</dbReference>
<dbReference type="GO" id="GO:0005163">
    <property type="term" value="F:nerve growth factor receptor binding"/>
    <property type="evidence" value="ECO:0007669"/>
    <property type="project" value="TreeGrafter"/>
</dbReference>
<dbReference type="GO" id="GO:0007169">
    <property type="term" value="P:cell surface receptor protein tyrosine kinase signaling pathway"/>
    <property type="evidence" value="ECO:0007669"/>
    <property type="project" value="TreeGrafter"/>
</dbReference>
<dbReference type="GO" id="GO:0050804">
    <property type="term" value="P:modulation of chemical synaptic transmission"/>
    <property type="evidence" value="ECO:0007669"/>
    <property type="project" value="TreeGrafter"/>
</dbReference>
<dbReference type="GO" id="GO:0043524">
    <property type="term" value="P:negative regulation of neuron apoptotic process"/>
    <property type="evidence" value="ECO:0007669"/>
    <property type="project" value="TreeGrafter"/>
</dbReference>
<dbReference type="GO" id="GO:0021675">
    <property type="term" value="P:nerve development"/>
    <property type="evidence" value="ECO:0007669"/>
    <property type="project" value="TreeGrafter"/>
</dbReference>
<dbReference type="GO" id="GO:0038180">
    <property type="term" value="P:nerve growth factor signaling pathway"/>
    <property type="evidence" value="ECO:0007669"/>
    <property type="project" value="TreeGrafter"/>
</dbReference>
<dbReference type="GO" id="GO:0048812">
    <property type="term" value="P:neuron projection morphogenesis"/>
    <property type="evidence" value="ECO:0007669"/>
    <property type="project" value="TreeGrafter"/>
</dbReference>
<dbReference type="Gene3D" id="2.10.90.10">
    <property type="entry name" value="Cystine-knot cytokines"/>
    <property type="match status" value="1"/>
</dbReference>
<dbReference type="InterPro" id="IPR029034">
    <property type="entry name" value="Cystine-knot_cytokine"/>
</dbReference>
<dbReference type="InterPro" id="IPR020408">
    <property type="entry name" value="Nerve_growth_factor-like"/>
</dbReference>
<dbReference type="InterPro" id="IPR002072">
    <property type="entry name" value="Nerve_growth_factor-rel"/>
</dbReference>
<dbReference type="InterPro" id="IPR045815">
    <property type="entry name" value="NTF3_N"/>
</dbReference>
<dbReference type="PANTHER" id="PTHR11589">
    <property type="entry name" value="NERVE GROWTH FACTOR NGF -RELATED"/>
    <property type="match status" value="1"/>
</dbReference>
<dbReference type="PANTHER" id="PTHR11589:SF4">
    <property type="entry name" value="NEUROTROPHIN-3"/>
    <property type="match status" value="1"/>
</dbReference>
<dbReference type="Pfam" id="PF00243">
    <property type="entry name" value="NGF"/>
    <property type="match status" value="1"/>
</dbReference>
<dbReference type="Pfam" id="PF19338">
    <property type="entry name" value="NTF3_N"/>
    <property type="match status" value="1"/>
</dbReference>
<dbReference type="PIRSF" id="PIRSF001789">
    <property type="entry name" value="NGF"/>
    <property type="match status" value="1"/>
</dbReference>
<dbReference type="SMART" id="SM00140">
    <property type="entry name" value="NGF"/>
    <property type="match status" value="1"/>
</dbReference>
<dbReference type="SUPFAM" id="SSF57501">
    <property type="entry name" value="Cystine-knot cytokines"/>
    <property type="match status" value="1"/>
</dbReference>
<dbReference type="PROSITE" id="PS50270">
    <property type="entry name" value="NGF_2"/>
    <property type="match status" value="1"/>
</dbReference>
<comment type="function">
    <text evidence="1">Seems to promote the survival of visceral and proprioceptive sensory neurons.</text>
</comment>
<comment type="subcellular location">
    <subcellularLocation>
        <location evidence="1">Secreted</location>
    </subcellularLocation>
</comment>
<comment type="similarity">
    <text evidence="4">Belongs to the NGF-beta family.</text>
</comment>
<name>NTF3_CHABO</name>
<protein>
    <recommendedName>
        <fullName>Neurotrophin-3</fullName>
        <shortName>NT-3</shortName>
    </recommendedName>
</protein>
<proteinExistence type="inferred from homology"/>
<feature type="signal peptide" evidence="2">
    <location>
        <begin position="1" status="less than"/>
        <end position="3"/>
    </location>
</feature>
<feature type="propeptide" id="PRO_0000346717" evidence="1">
    <location>
        <begin position="4"/>
        <end position="119"/>
    </location>
</feature>
<feature type="chain" id="PRO_0000346718" description="Neurotrophin-3">
    <location>
        <begin position="120"/>
        <end position="163" status="greater than"/>
    </location>
</feature>
<feature type="region of interest" description="Disordered" evidence="3">
    <location>
        <begin position="113"/>
        <end position="133"/>
    </location>
</feature>
<feature type="compositionally biased region" description="Basic and acidic residues" evidence="3">
    <location>
        <begin position="123"/>
        <end position="133"/>
    </location>
</feature>
<feature type="glycosylation site" description="N-linked (GlcNAc...) asparagine" evidence="2">
    <location>
        <position position="112"/>
    </location>
</feature>
<feature type="non-terminal residue">
    <location>
        <position position="1"/>
    </location>
</feature>
<feature type="non-terminal residue">
    <location>
        <position position="163"/>
    </location>
</feature>
<sequence>IQSTSMDQGILTEDSMNSFIRTLIQGGIWKNKVPKQTARTKDGMQTTVKKTEAEADAMASKDTRLGFQPVVSVDAELLRQQRRFSSPRVLLSENTPLEPPPLYLTEEPMVLNRTSRRKREGKSHRGEYSVCDSESRWVTDKSSAVDIRGHQVTVLGEIRMGSS</sequence>
<keyword id="KW-0165">Cleavage on pair of basic residues</keyword>
<keyword id="KW-0325">Glycoprotein</keyword>
<keyword id="KW-0339">Growth factor</keyword>
<keyword id="KW-0964">Secreted</keyword>
<keyword id="KW-0732">Signal</keyword>
<evidence type="ECO:0000250" key="1"/>
<evidence type="ECO:0000255" key="2"/>
<evidence type="ECO:0000256" key="3">
    <source>
        <dbReference type="SAM" id="MobiDB-lite"/>
    </source>
</evidence>
<evidence type="ECO:0000305" key="4"/>
<accession>Q1X6X9</accession>
<gene>
    <name type="primary">NTF3</name>
</gene>
<reference key="1">
    <citation type="journal article" date="2006" name="Mol. Phylogenet. Evol.">
        <title>Dispersal and vicariance: the complex evolutionary history of boid snakes.</title>
        <authorList>
            <person name="Noonan B.P."/>
            <person name="Chippindale P.T."/>
        </authorList>
    </citation>
    <scope>NUCLEOTIDE SEQUENCE [GENOMIC DNA]</scope>
</reference>